<name>RIMM_SHEHH</name>
<organism>
    <name type="scientific">Shewanella halifaxensis (strain HAW-EB4)</name>
    <dbReference type="NCBI Taxonomy" id="458817"/>
    <lineage>
        <taxon>Bacteria</taxon>
        <taxon>Pseudomonadati</taxon>
        <taxon>Pseudomonadota</taxon>
        <taxon>Gammaproteobacteria</taxon>
        <taxon>Alteromonadales</taxon>
        <taxon>Shewanellaceae</taxon>
        <taxon>Shewanella</taxon>
    </lineage>
</organism>
<reference key="1">
    <citation type="submission" date="2008-01" db="EMBL/GenBank/DDBJ databases">
        <title>Complete sequence of Shewanella halifaxensis HAW-EB4.</title>
        <authorList>
            <consortium name="US DOE Joint Genome Institute"/>
            <person name="Copeland A."/>
            <person name="Lucas S."/>
            <person name="Lapidus A."/>
            <person name="Glavina del Rio T."/>
            <person name="Dalin E."/>
            <person name="Tice H."/>
            <person name="Bruce D."/>
            <person name="Goodwin L."/>
            <person name="Pitluck S."/>
            <person name="Sims D."/>
            <person name="Brettin T."/>
            <person name="Detter J.C."/>
            <person name="Han C."/>
            <person name="Kuske C.R."/>
            <person name="Schmutz J."/>
            <person name="Larimer F."/>
            <person name="Land M."/>
            <person name="Hauser L."/>
            <person name="Kyrpides N."/>
            <person name="Kim E."/>
            <person name="Zhao J.-S."/>
            <person name="Richardson P."/>
        </authorList>
    </citation>
    <scope>NUCLEOTIDE SEQUENCE [LARGE SCALE GENOMIC DNA]</scope>
    <source>
        <strain>HAW-EB4</strain>
    </source>
</reference>
<dbReference type="EMBL" id="CP000931">
    <property type="protein sequence ID" value="ABZ75667.1"/>
    <property type="molecule type" value="Genomic_DNA"/>
</dbReference>
<dbReference type="RefSeq" id="WP_012276212.1">
    <property type="nucleotide sequence ID" value="NC_010334.1"/>
</dbReference>
<dbReference type="SMR" id="B0TJ76"/>
<dbReference type="STRING" id="458817.Shal_1098"/>
<dbReference type="KEGG" id="shl:Shal_1098"/>
<dbReference type="eggNOG" id="COG0806">
    <property type="taxonomic scope" value="Bacteria"/>
</dbReference>
<dbReference type="HOGENOM" id="CLU_077636_1_0_6"/>
<dbReference type="OrthoDB" id="9783509at2"/>
<dbReference type="Proteomes" id="UP000001317">
    <property type="component" value="Chromosome"/>
</dbReference>
<dbReference type="GO" id="GO:0005737">
    <property type="term" value="C:cytoplasm"/>
    <property type="evidence" value="ECO:0007669"/>
    <property type="project" value="UniProtKB-SubCell"/>
</dbReference>
<dbReference type="GO" id="GO:0005840">
    <property type="term" value="C:ribosome"/>
    <property type="evidence" value="ECO:0007669"/>
    <property type="project" value="InterPro"/>
</dbReference>
<dbReference type="GO" id="GO:0043022">
    <property type="term" value="F:ribosome binding"/>
    <property type="evidence" value="ECO:0007669"/>
    <property type="project" value="InterPro"/>
</dbReference>
<dbReference type="GO" id="GO:0042274">
    <property type="term" value="P:ribosomal small subunit biogenesis"/>
    <property type="evidence" value="ECO:0007669"/>
    <property type="project" value="UniProtKB-UniRule"/>
</dbReference>
<dbReference type="GO" id="GO:0006364">
    <property type="term" value="P:rRNA processing"/>
    <property type="evidence" value="ECO:0007669"/>
    <property type="project" value="UniProtKB-UniRule"/>
</dbReference>
<dbReference type="Gene3D" id="2.30.30.240">
    <property type="entry name" value="PRC-barrel domain"/>
    <property type="match status" value="1"/>
</dbReference>
<dbReference type="Gene3D" id="2.40.30.60">
    <property type="entry name" value="RimM"/>
    <property type="match status" value="1"/>
</dbReference>
<dbReference type="HAMAP" id="MF_00014">
    <property type="entry name" value="Ribosome_mat_RimM"/>
    <property type="match status" value="1"/>
</dbReference>
<dbReference type="InterPro" id="IPR011033">
    <property type="entry name" value="PRC_barrel-like_sf"/>
</dbReference>
<dbReference type="InterPro" id="IPR056792">
    <property type="entry name" value="PRC_RimM"/>
</dbReference>
<dbReference type="InterPro" id="IPR011961">
    <property type="entry name" value="RimM"/>
</dbReference>
<dbReference type="InterPro" id="IPR002676">
    <property type="entry name" value="RimM_N"/>
</dbReference>
<dbReference type="InterPro" id="IPR036976">
    <property type="entry name" value="RimM_N_sf"/>
</dbReference>
<dbReference type="InterPro" id="IPR009000">
    <property type="entry name" value="Transl_B-barrel_sf"/>
</dbReference>
<dbReference type="NCBIfam" id="TIGR02273">
    <property type="entry name" value="16S_RimM"/>
    <property type="match status" value="1"/>
</dbReference>
<dbReference type="PANTHER" id="PTHR33692">
    <property type="entry name" value="RIBOSOME MATURATION FACTOR RIMM"/>
    <property type="match status" value="1"/>
</dbReference>
<dbReference type="PANTHER" id="PTHR33692:SF1">
    <property type="entry name" value="RIBOSOME MATURATION FACTOR RIMM"/>
    <property type="match status" value="1"/>
</dbReference>
<dbReference type="Pfam" id="PF24986">
    <property type="entry name" value="PRC_RimM"/>
    <property type="match status" value="1"/>
</dbReference>
<dbReference type="Pfam" id="PF01782">
    <property type="entry name" value="RimM"/>
    <property type="match status" value="1"/>
</dbReference>
<dbReference type="SUPFAM" id="SSF50346">
    <property type="entry name" value="PRC-barrel domain"/>
    <property type="match status" value="1"/>
</dbReference>
<dbReference type="SUPFAM" id="SSF50447">
    <property type="entry name" value="Translation proteins"/>
    <property type="match status" value="1"/>
</dbReference>
<protein>
    <recommendedName>
        <fullName evidence="1">Ribosome maturation factor RimM</fullName>
    </recommendedName>
</protein>
<comment type="function">
    <text evidence="1">An accessory protein needed during the final step in the assembly of 30S ribosomal subunit, possibly for assembly of the head region. Essential for efficient processing of 16S rRNA. May be needed both before and after RbfA during the maturation of 16S rRNA. It has affinity for free ribosomal 30S subunits but not for 70S ribosomes.</text>
</comment>
<comment type="subunit">
    <text evidence="1">Binds ribosomal protein uS19.</text>
</comment>
<comment type="subcellular location">
    <subcellularLocation>
        <location evidence="1">Cytoplasm</location>
    </subcellularLocation>
</comment>
<comment type="domain">
    <text evidence="1">The PRC barrel domain binds ribosomal protein uS19.</text>
</comment>
<comment type="similarity">
    <text evidence="1">Belongs to the RimM family.</text>
</comment>
<gene>
    <name evidence="1" type="primary">rimM</name>
    <name type="ordered locus">Shal_1098</name>
</gene>
<accession>B0TJ76</accession>
<feature type="chain" id="PRO_1000074041" description="Ribosome maturation factor RimM">
    <location>
        <begin position="1"/>
        <end position="176"/>
    </location>
</feature>
<feature type="domain" description="PRC barrel" evidence="1">
    <location>
        <begin position="97"/>
        <end position="176"/>
    </location>
</feature>
<keyword id="KW-0143">Chaperone</keyword>
<keyword id="KW-0963">Cytoplasm</keyword>
<keyword id="KW-0690">Ribosome biogenesis</keyword>
<keyword id="KW-0698">rRNA processing</keyword>
<proteinExistence type="inferred from homology"/>
<sequence length="176" mass="19817">MSSKQEPVILGKLGSSFGIKGWLKITTYTDSVEGIFDYSPWLIKEQGEWREVKVAQWRFQGKAVVACLEGVTTRDEAQALTNCEIAVPAEQMQDLPEDEFYWRDLIGCEVINTKGYNMGTVQEIVETGSNDVLLVKANAKDGFGKAERMIPFVTDQFIQKVDLAAKQILVDWDPDF</sequence>
<evidence type="ECO:0000255" key="1">
    <source>
        <dbReference type="HAMAP-Rule" id="MF_00014"/>
    </source>
</evidence>